<organism>
    <name type="scientific">Chromobacterium violaceum (strain ATCC 12472 / DSM 30191 / JCM 1249 / CCUG 213 / NBRC 12614 / NCIMB 9131 / NCTC 9757 / MK)</name>
    <dbReference type="NCBI Taxonomy" id="243365"/>
    <lineage>
        <taxon>Bacteria</taxon>
        <taxon>Pseudomonadati</taxon>
        <taxon>Pseudomonadota</taxon>
        <taxon>Betaproteobacteria</taxon>
        <taxon>Neisseriales</taxon>
        <taxon>Chromobacteriaceae</taxon>
        <taxon>Chromobacterium</taxon>
    </lineage>
</organism>
<reference key="1">
    <citation type="journal article" date="2003" name="Proc. Natl. Acad. Sci. U.S.A.">
        <title>The complete genome sequence of Chromobacterium violaceum reveals remarkable and exploitable bacterial adaptability.</title>
        <authorList>
            <person name="Vasconcelos A.T.R."/>
            <person name="de Almeida D.F."/>
            <person name="Hungria M."/>
            <person name="Guimaraes C.T."/>
            <person name="Antonio R.V."/>
            <person name="Almeida F.C."/>
            <person name="de Almeida L.G.P."/>
            <person name="de Almeida R."/>
            <person name="Alves-Gomes J.A."/>
            <person name="Andrade E.M."/>
            <person name="Araripe J."/>
            <person name="de Araujo M.F.F."/>
            <person name="Astolfi-Filho S."/>
            <person name="Azevedo V."/>
            <person name="Baptista A.J."/>
            <person name="Bataus L.A.M."/>
            <person name="Batista J.S."/>
            <person name="Belo A."/>
            <person name="van den Berg C."/>
            <person name="Bogo M."/>
            <person name="Bonatto S."/>
            <person name="Bordignon J."/>
            <person name="Brigido M.M."/>
            <person name="Brito C.A."/>
            <person name="Brocchi M."/>
            <person name="Burity H.A."/>
            <person name="Camargo A.A."/>
            <person name="Cardoso D.D.P."/>
            <person name="Carneiro N.P."/>
            <person name="Carraro D.M."/>
            <person name="Carvalho C.M.B."/>
            <person name="Cascardo J.C.M."/>
            <person name="Cavada B.S."/>
            <person name="Chueire L.M.O."/>
            <person name="Creczynski-Pasa T.B."/>
            <person name="Cunha-Junior N.C."/>
            <person name="Fagundes N."/>
            <person name="Falcao C.L."/>
            <person name="Fantinatti F."/>
            <person name="Farias I.P."/>
            <person name="Felipe M.S.S."/>
            <person name="Ferrari L.P."/>
            <person name="Ferro J.A."/>
            <person name="Ferro M.I.T."/>
            <person name="Franco G.R."/>
            <person name="Freitas N.S.A."/>
            <person name="Furlan L.R."/>
            <person name="Gazzinelli R.T."/>
            <person name="Gomes E.A."/>
            <person name="Goncalves P.R."/>
            <person name="Grangeiro T.B."/>
            <person name="Grattapaglia D."/>
            <person name="Grisard E.C."/>
            <person name="Hanna E.S."/>
            <person name="Jardim S.N."/>
            <person name="Laurino J."/>
            <person name="Leoi L.C.T."/>
            <person name="Lima L.F.A."/>
            <person name="Loureiro M.F."/>
            <person name="Lyra M.C.C.P."/>
            <person name="Madeira H.M.F."/>
            <person name="Manfio G.P."/>
            <person name="Maranhao A.Q."/>
            <person name="Martins W.S."/>
            <person name="di Mauro S.M.Z."/>
            <person name="de Medeiros S.R.B."/>
            <person name="Meissner R.V."/>
            <person name="Moreira M.A.M."/>
            <person name="Nascimento F.F."/>
            <person name="Nicolas M.F."/>
            <person name="Oliveira J.G."/>
            <person name="Oliveira S.C."/>
            <person name="Paixao R.F.C."/>
            <person name="Parente J.A."/>
            <person name="Pedrosa F.O."/>
            <person name="Pena S.D.J."/>
            <person name="Pereira J.O."/>
            <person name="Pereira M."/>
            <person name="Pinto L.S.R.C."/>
            <person name="Pinto L.S."/>
            <person name="Porto J.I.R."/>
            <person name="Potrich D.P."/>
            <person name="Ramalho-Neto C.E."/>
            <person name="Reis A.M.M."/>
            <person name="Rigo L.U."/>
            <person name="Rondinelli E."/>
            <person name="Santos E.B.P."/>
            <person name="Santos F.R."/>
            <person name="Schneider M.P.C."/>
            <person name="Seuanez H.N."/>
            <person name="Silva A.M.R."/>
            <person name="da Silva A.L.C."/>
            <person name="Silva D.W."/>
            <person name="Silva R."/>
            <person name="Simoes I.C."/>
            <person name="Simon D."/>
            <person name="Soares C.M.A."/>
            <person name="Soares R.B.A."/>
            <person name="Souza E.M."/>
            <person name="Souza K.R.L."/>
            <person name="Souza R.C."/>
            <person name="Steffens M.B.R."/>
            <person name="Steindel M."/>
            <person name="Teixeira S.R."/>
            <person name="Urmenyi T."/>
            <person name="Vettore A."/>
            <person name="Wassem R."/>
            <person name="Zaha A."/>
            <person name="Simpson A.J.G."/>
        </authorList>
    </citation>
    <scope>NUCLEOTIDE SEQUENCE [LARGE SCALE GENOMIC DNA]</scope>
    <source>
        <strain>ATCC 12472 / DSM 30191 / JCM 1249 / CCUG 213 / NBRC 12614 / NCIMB 9131 / NCTC 9757 / MK</strain>
    </source>
</reference>
<protein>
    <recommendedName>
        <fullName evidence="1">Isoleucine--tRNA ligase</fullName>
        <ecNumber evidence="1">6.1.1.5</ecNumber>
    </recommendedName>
    <alternativeName>
        <fullName evidence="1">Isoleucyl-tRNA synthetase</fullName>
        <shortName evidence="1">IleRS</shortName>
    </alternativeName>
</protein>
<comment type="function">
    <text evidence="1">Catalyzes the attachment of isoleucine to tRNA(Ile). As IleRS can inadvertently accommodate and process structurally similar amino acids such as valine, to avoid such errors it has two additional distinct tRNA(Ile)-dependent editing activities. One activity is designated as 'pretransfer' editing and involves the hydrolysis of activated Val-AMP. The other activity is designated 'posttransfer' editing and involves deacylation of mischarged Val-tRNA(Ile).</text>
</comment>
<comment type="catalytic activity">
    <reaction evidence="1">
        <text>tRNA(Ile) + L-isoleucine + ATP = L-isoleucyl-tRNA(Ile) + AMP + diphosphate</text>
        <dbReference type="Rhea" id="RHEA:11060"/>
        <dbReference type="Rhea" id="RHEA-COMP:9666"/>
        <dbReference type="Rhea" id="RHEA-COMP:9695"/>
        <dbReference type="ChEBI" id="CHEBI:30616"/>
        <dbReference type="ChEBI" id="CHEBI:33019"/>
        <dbReference type="ChEBI" id="CHEBI:58045"/>
        <dbReference type="ChEBI" id="CHEBI:78442"/>
        <dbReference type="ChEBI" id="CHEBI:78528"/>
        <dbReference type="ChEBI" id="CHEBI:456215"/>
        <dbReference type="EC" id="6.1.1.5"/>
    </reaction>
</comment>
<comment type="cofactor">
    <cofactor evidence="1">
        <name>Zn(2+)</name>
        <dbReference type="ChEBI" id="CHEBI:29105"/>
    </cofactor>
    <text evidence="1">Binds 1 zinc ion per subunit.</text>
</comment>
<comment type="subunit">
    <text evidence="1">Monomer.</text>
</comment>
<comment type="subcellular location">
    <subcellularLocation>
        <location evidence="1">Cytoplasm</location>
    </subcellularLocation>
</comment>
<comment type="domain">
    <text evidence="1">IleRS has two distinct active sites: one for aminoacylation and one for editing. The misactivated valine is translocated from the active site to the editing site, which sterically excludes the correctly activated isoleucine. The single editing site contains two valyl binding pockets, one specific for each substrate (Val-AMP or Val-tRNA(Ile)).</text>
</comment>
<comment type="similarity">
    <text evidence="1">Belongs to the class-I aminoacyl-tRNA synthetase family. IleS type 1 subfamily.</text>
</comment>
<proteinExistence type="inferred from homology"/>
<keyword id="KW-0030">Aminoacyl-tRNA synthetase</keyword>
<keyword id="KW-0067">ATP-binding</keyword>
<keyword id="KW-0963">Cytoplasm</keyword>
<keyword id="KW-0436">Ligase</keyword>
<keyword id="KW-0479">Metal-binding</keyword>
<keyword id="KW-0547">Nucleotide-binding</keyword>
<keyword id="KW-0648">Protein biosynthesis</keyword>
<keyword id="KW-1185">Reference proteome</keyword>
<keyword id="KW-0862">Zinc</keyword>
<gene>
    <name evidence="1" type="primary">ileS</name>
    <name type="ordered locus">CV_3569</name>
</gene>
<dbReference type="EC" id="6.1.1.5" evidence="1"/>
<dbReference type="EMBL" id="AE016825">
    <property type="protein sequence ID" value="AAQ61231.1"/>
    <property type="molecule type" value="Genomic_DNA"/>
</dbReference>
<dbReference type="RefSeq" id="WP_011137116.1">
    <property type="nucleotide sequence ID" value="NC_005085.1"/>
</dbReference>
<dbReference type="SMR" id="Q7NS57"/>
<dbReference type="STRING" id="243365.CV_3569"/>
<dbReference type="KEGG" id="cvi:CV_3569"/>
<dbReference type="eggNOG" id="COG0060">
    <property type="taxonomic scope" value="Bacteria"/>
</dbReference>
<dbReference type="HOGENOM" id="CLU_001493_7_1_4"/>
<dbReference type="OrthoDB" id="9810365at2"/>
<dbReference type="Proteomes" id="UP000001424">
    <property type="component" value="Chromosome"/>
</dbReference>
<dbReference type="GO" id="GO:0005829">
    <property type="term" value="C:cytosol"/>
    <property type="evidence" value="ECO:0007669"/>
    <property type="project" value="TreeGrafter"/>
</dbReference>
<dbReference type="GO" id="GO:0002161">
    <property type="term" value="F:aminoacyl-tRNA deacylase activity"/>
    <property type="evidence" value="ECO:0007669"/>
    <property type="project" value="InterPro"/>
</dbReference>
<dbReference type="GO" id="GO:0005524">
    <property type="term" value="F:ATP binding"/>
    <property type="evidence" value="ECO:0007669"/>
    <property type="project" value="UniProtKB-UniRule"/>
</dbReference>
<dbReference type="GO" id="GO:0004822">
    <property type="term" value="F:isoleucine-tRNA ligase activity"/>
    <property type="evidence" value="ECO:0007669"/>
    <property type="project" value="UniProtKB-UniRule"/>
</dbReference>
<dbReference type="GO" id="GO:0000049">
    <property type="term" value="F:tRNA binding"/>
    <property type="evidence" value="ECO:0007669"/>
    <property type="project" value="InterPro"/>
</dbReference>
<dbReference type="GO" id="GO:0008270">
    <property type="term" value="F:zinc ion binding"/>
    <property type="evidence" value="ECO:0007669"/>
    <property type="project" value="UniProtKB-UniRule"/>
</dbReference>
<dbReference type="GO" id="GO:0006428">
    <property type="term" value="P:isoleucyl-tRNA aminoacylation"/>
    <property type="evidence" value="ECO:0007669"/>
    <property type="project" value="UniProtKB-UniRule"/>
</dbReference>
<dbReference type="CDD" id="cd07960">
    <property type="entry name" value="Anticodon_Ia_Ile_BEm"/>
    <property type="match status" value="1"/>
</dbReference>
<dbReference type="CDD" id="cd00818">
    <property type="entry name" value="IleRS_core"/>
    <property type="match status" value="1"/>
</dbReference>
<dbReference type="FunFam" id="1.10.730.20:FF:000001">
    <property type="entry name" value="Isoleucine--tRNA ligase"/>
    <property type="match status" value="1"/>
</dbReference>
<dbReference type="FunFam" id="3.40.50.620:FF:000042">
    <property type="entry name" value="Isoleucine--tRNA ligase"/>
    <property type="match status" value="1"/>
</dbReference>
<dbReference type="FunFam" id="3.40.50.620:FF:000048">
    <property type="entry name" value="Isoleucine--tRNA ligase"/>
    <property type="match status" value="1"/>
</dbReference>
<dbReference type="FunFam" id="3.90.740.10:FF:000022">
    <property type="entry name" value="Isoleucine--tRNA ligase"/>
    <property type="match status" value="1"/>
</dbReference>
<dbReference type="Gene3D" id="1.10.730.20">
    <property type="match status" value="1"/>
</dbReference>
<dbReference type="Gene3D" id="3.40.50.620">
    <property type="entry name" value="HUPs"/>
    <property type="match status" value="2"/>
</dbReference>
<dbReference type="Gene3D" id="3.90.740.10">
    <property type="entry name" value="Valyl/Leucyl/Isoleucyl-tRNA synthetase, editing domain"/>
    <property type="match status" value="1"/>
</dbReference>
<dbReference type="HAMAP" id="MF_02002">
    <property type="entry name" value="Ile_tRNA_synth_type1"/>
    <property type="match status" value="1"/>
</dbReference>
<dbReference type="InterPro" id="IPR001412">
    <property type="entry name" value="aa-tRNA-synth_I_CS"/>
</dbReference>
<dbReference type="InterPro" id="IPR002300">
    <property type="entry name" value="aa-tRNA-synth_Ia"/>
</dbReference>
<dbReference type="InterPro" id="IPR033708">
    <property type="entry name" value="Anticodon_Ile_BEm"/>
</dbReference>
<dbReference type="InterPro" id="IPR002301">
    <property type="entry name" value="Ile-tRNA-ligase"/>
</dbReference>
<dbReference type="InterPro" id="IPR023585">
    <property type="entry name" value="Ile-tRNA-ligase_type1"/>
</dbReference>
<dbReference type="InterPro" id="IPR050081">
    <property type="entry name" value="Ile-tRNA_ligase"/>
</dbReference>
<dbReference type="InterPro" id="IPR013155">
    <property type="entry name" value="M/V/L/I-tRNA-synth_anticd-bd"/>
</dbReference>
<dbReference type="InterPro" id="IPR014729">
    <property type="entry name" value="Rossmann-like_a/b/a_fold"/>
</dbReference>
<dbReference type="InterPro" id="IPR009080">
    <property type="entry name" value="tRNAsynth_Ia_anticodon-bd"/>
</dbReference>
<dbReference type="InterPro" id="IPR009008">
    <property type="entry name" value="Val/Leu/Ile-tRNA-synth_edit"/>
</dbReference>
<dbReference type="InterPro" id="IPR010663">
    <property type="entry name" value="Znf_FPG/IleRS"/>
</dbReference>
<dbReference type="NCBIfam" id="TIGR00392">
    <property type="entry name" value="ileS"/>
    <property type="match status" value="1"/>
</dbReference>
<dbReference type="PANTHER" id="PTHR42765:SF1">
    <property type="entry name" value="ISOLEUCINE--TRNA LIGASE, MITOCHONDRIAL"/>
    <property type="match status" value="1"/>
</dbReference>
<dbReference type="PANTHER" id="PTHR42765">
    <property type="entry name" value="SOLEUCYL-TRNA SYNTHETASE"/>
    <property type="match status" value="1"/>
</dbReference>
<dbReference type="Pfam" id="PF08264">
    <property type="entry name" value="Anticodon_1"/>
    <property type="match status" value="1"/>
</dbReference>
<dbReference type="Pfam" id="PF00133">
    <property type="entry name" value="tRNA-synt_1"/>
    <property type="match status" value="1"/>
</dbReference>
<dbReference type="Pfam" id="PF06827">
    <property type="entry name" value="zf-FPG_IleRS"/>
    <property type="match status" value="1"/>
</dbReference>
<dbReference type="PRINTS" id="PR00984">
    <property type="entry name" value="TRNASYNTHILE"/>
</dbReference>
<dbReference type="SUPFAM" id="SSF47323">
    <property type="entry name" value="Anticodon-binding domain of a subclass of class I aminoacyl-tRNA synthetases"/>
    <property type="match status" value="1"/>
</dbReference>
<dbReference type="SUPFAM" id="SSF52374">
    <property type="entry name" value="Nucleotidylyl transferase"/>
    <property type="match status" value="1"/>
</dbReference>
<dbReference type="SUPFAM" id="SSF50677">
    <property type="entry name" value="ValRS/IleRS/LeuRS editing domain"/>
    <property type="match status" value="1"/>
</dbReference>
<dbReference type="PROSITE" id="PS00178">
    <property type="entry name" value="AA_TRNA_LIGASE_I"/>
    <property type="match status" value="1"/>
</dbReference>
<name>SYI_CHRVO</name>
<evidence type="ECO:0000255" key="1">
    <source>
        <dbReference type="HAMAP-Rule" id="MF_02002"/>
    </source>
</evidence>
<feature type="chain" id="PRO_0000098375" description="Isoleucine--tRNA ligase">
    <location>
        <begin position="1"/>
        <end position="925"/>
    </location>
</feature>
<feature type="short sequence motif" description="'HIGH' region">
    <location>
        <begin position="59"/>
        <end position="69"/>
    </location>
</feature>
<feature type="short sequence motif" description="'KMSKS' region">
    <location>
        <begin position="601"/>
        <end position="605"/>
    </location>
</feature>
<feature type="binding site" evidence="1">
    <location>
        <position position="560"/>
    </location>
    <ligand>
        <name>L-isoleucyl-5'-AMP</name>
        <dbReference type="ChEBI" id="CHEBI:178002"/>
    </ligand>
</feature>
<feature type="binding site" evidence="1">
    <location>
        <position position="604"/>
    </location>
    <ligand>
        <name>ATP</name>
        <dbReference type="ChEBI" id="CHEBI:30616"/>
    </ligand>
</feature>
<feature type="binding site" evidence="1">
    <location>
        <position position="888"/>
    </location>
    <ligand>
        <name>Zn(2+)</name>
        <dbReference type="ChEBI" id="CHEBI:29105"/>
    </ligand>
</feature>
<feature type="binding site" evidence="1">
    <location>
        <position position="891"/>
    </location>
    <ligand>
        <name>Zn(2+)</name>
        <dbReference type="ChEBI" id="CHEBI:29105"/>
    </ligand>
</feature>
<feature type="binding site" evidence="1">
    <location>
        <position position="908"/>
    </location>
    <ligand>
        <name>Zn(2+)</name>
        <dbReference type="ChEBI" id="CHEBI:29105"/>
    </ligand>
</feature>
<feature type="binding site" evidence="1">
    <location>
        <position position="911"/>
    </location>
    <ligand>
        <name>Zn(2+)</name>
        <dbReference type="ChEBI" id="CHEBI:29105"/>
    </ligand>
</feature>
<sequence>MSIDYRKTVNLLDTPFAMRGDLAKREPAWVKRWQEEKRYEKLRKLAAGRPKFILHDGPPYANNDIHLGHAVNKVLKDIIVRSKTLAGFDAPYVPGWDCHGLPIELMVEKLHGKDIPAAKFRELCREYAKEQVARQKKGFIRLGVLGDWDNPYLTMDFKTEADIVRTLGKIHENGYLTKGEKPVHWCIECGSSLAEAEVEYEDKVSPAIDVGFKVVDTDKASAAFGADAAGAMAVIWTTTPWTLPANQAVAAGANLDYQLVDTPKGKLILGKDLVESAMKRYGVETYRVLGEAKGQALELLQLQHPFYGRQVPVILGDHVTTDAGTGLVHTAPAHGLEDFQAGLQYKLPIANPVADDGRYKSTTELFAGMLVWDANPRVIETLESHGSLVHKSKLEHSYPHCWRHKTPIIFRATPQWFISMDRKANGGETLREVSQRAVDATEFFPSWGRARLDAMIKNSPDWCVSRQRNWGVPMTFFIHKESGELHPRSAQLLEEVALRIEQQGIEAWFSLDAKELLGEEAEQYRKLTDTLDVWFDSGATHFAVLKQRPELAWPADLYLEGSDQHRGWFQSSLKTGCATIGRAPYKQLLTHGFTVDDKGYKMSKSKGNGIAPEEICGTLGADILRLWVASADYSGDMSLSQEILKRTTESYRRLRNTIRFLLSNLSDFDPLEHVVPLANMVEMDQYALLRAREVQEKVVGELYSRYAFHHVVQEVVGYCSEDLGAFYLDVIKDRLYTTKADSHARRSAQTALYHITRSLLLMVAPILCFTADEAWNVLVDSEEESTLYHIWHEFPAQTVEREAALSSKWQAIRELRAAVNKEIEALRSADKLGSSLQAEVEIDAPAELARHLASLGEELKFVLIVSKADVREAGEVAIRVSPSAHGKCDRCWHYRADVGSHAGHGAVCGRCVDNLDGQGEPRRYA</sequence>
<accession>Q7NS57</accession>